<sequence>MPIITLPDGSQRHFDNPVSTLEVAQSIGPGLAKATIAGRVNGARVDACDLIEHDASLEIITTKDEVDGLEIVRHSCAHLLGHALKQLYPNAKMAIGPTIDSGFYYDIDLEQSLSQEDLEKIEARMVELAKTKYAVVKKKVSWQEARDTFESRGESYKMEILDENVARDDRPGLYHHEEYIDMCRGPHVPHMGFCQNFKLLNIAGAYWRGNSDNKMLQRIYGTAFHDKKALQAHLTRLEEAAKRDHRKIGKQLDLFHMQQEAPGMVFWHHNGWSIFRDLEIFIRQKLNEYGYQEVKGPLMMDRVLWERSGHWDKYADAMFTTSSENREYAIKPMNCPGHIQIFNQGLKSYRDLPLRMAEFGSCHRNEPSGSLHGIMRVRGFTQDDAHIFCTEDQIQQEVTSCIKMVYDTYTTFGFQNIVVKLSTRPEKRVGSDEIWDKSEQALIDSLKAMDIPFEIQEGEGAFYGPKIEFTLYDCLDRAWQCGTVQLDFNLPTRLGATYVGESNERLIPVMIHRAILGSLERFIGILIEEYAGFFPTWLAPEQAVVVNITDKQADYAHEVAQKLQKCGIRAKADLRNEKIGFKIREHTLKRVPYMLVCGDQEMEAGEIAVRTRKGKDLGKFKLDDFIAHIQAEIASRKLNLEE</sequence>
<comment type="function">
    <text evidence="1">Catalyzes the attachment of threonine to tRNA(Thr) in a two-step reaction: L-threonine is first activated by ATP to form Thr-AMP and then transferred to the acceptor end of tRNA(Thr). Also edits incorrectly charged L-seryl-tRNA(Thr).</text>
</comment>
<comment type="catalytic activity">
    <reaction evidence="1">
        <text>tRNA(Thr) + L-threonine + ATP = L-threonyl-tRNA(Thr) + AMP + diphosphate + H(+)</text>
        <dbReference type="Rhea" id="RHEA:24624"/>
        <dbReference type="Rhea" id="RHEA-COMP:9670"/>
        <dbReference type="Rhea" id="RHEA-COMP:9704"/>
        <dbReference type="ChEBI" id="CHEBI:15378"/>
        <dbReference type="ChEBI" id="CHEBI:30616"/>
        <dbReference type="ChEBI" id="CHEBI:33019"/>
        <dbReference type="ChEBI" id="CHEBI:57926"/>
        <dbReference type="ChEBI" id="CHEBI:78442"/>
        <dbReference type="ChEBI" id="CHEBI:78534"/>
        <dbReference type="ChEBI" id="CHEBI:456215"/>
        <dbReference type="EC" id="6.1.1.3"/>
    </reaction>
</comment>
<comment type="cofactor">
    <cofactor evidence="1">
        <name>Zn(2+)</name>
        <dbReference type="ChEBI" id="CHEBI:29105"/>
    </cofactor>
    <text evidence="1">Binds 1 zinc ion per subunit.</text>
</comment>
<comment type="subunit">
    <text evidence="1">Homodimer.</text>
</comment>
<comment type="subcellular location">
    <subcellularLocation>
        <location evidence="1">Cytoplasm</location>
    </subcellularLocation>
</comment>
<comment type="similarity">
    <text evidence="1">Belongs to the class-II aminoacyl-tRNA synthetase family.</text>
</comment>
<organism>
    <name type="scientific">Vibrio cholerae serotype O1 (strain M66-2)</name>
    <dbReference type="NCBI Taxonomy" id="579112"/>
    <lineage>
        <taxon>Bacteria</taxon>
        <taxon>Pseudomonadati</taxon>
        <taxon>Pseudomonadota</taxon>
        <taxon>Gammaproteobacteria</taxon>
        <taxon>Vibrionales</taxon>
        <taxon>Vibrionaceae</taxon>
        <taxon>Vibrio</taxon>
    </lineage>
</organism>
<evidence type="ECO:0000255" key="1">
    <source>
        <dbReference type="HAMAP-Rule" id="MF_00184"/>
    </source>
</evidence>
<evidence type="ECO:0000255" key="2">
    <source>
        <dbReference type="PROSITE-ProRule" id="PRU01228"/>
    </source>
</evidence>
<dbReference type="EC" id="6.1.1.3" evidence="1"/>
<dbReference type="EMBL" id="CP001234">
    <property type="protein sequence ID" value="ACP07263.1"/>
    <property type="molecule type" value="Genomic_DNA"/>
</dbReference>
<dbReference type="RefSeq" id="WP_001121779.1">
    <property type="nucleotide sequence ID" value="NC_012580.1"/>
</dbReference>
<dbReference type="SMR" id="C3LUV8"/>
<dbReference type="KEGG" id="vcm:VCM66_A0286"/>
<dbReference type="HOGENOM" id="CLU_008554_0_1_6"/>
<dbReference type="Proteomes" id="UP000001217">
    <property type="component" value="Chromosome II"/>
</dbReference>
<dbReference type="GO" id="GO:0005829">
    <property type="term" value="C:cytosol"/>
    <property type="evidence" value="ECO:0007669"/>
    <property type="project" value="TreeGrafter"/>
</dbReference>
<dbReference type="GO" id="GO:0005524">
    <property type="term" value="F:ATP binding"/>
    <property type="evidence" value="ECO:0007669"/>
    <property type="project" value="UniProtKB-UniRule"/>
</dbReference>
<dbReference type="GO" id="GO:0046872">
    <property type="term" value="F:metal ion binding"/>
    <property type="evidence" value="ECO:0007669"/>
    <property type="project" value="UniProtKB-KW"/>
</dbReference>
<dbReference type="GO" id="GO:0004829">
    <property type="term" value="F:threonine-tRNA ligase activity"/>
    <property type="evidence" value="ECO:0007669"/>
    <property type="project" value="UniProtKB-UniRule"/>
</dbReference>
<dbReference type="GO" id="GO:0000049">
    <property type="term" value="F:tRNA binding"/>
    <property type="evidence" value="ECO:0007669"/>
    <property type="project" value="UniProtKB-KW"/>
</dbReference>
<dbReference type="GO" id="GO:0006435">
    <property type="term" value="P:threonyl-tRNA aminoacylation"/>
    <property type="evidence" value="ECO:0007669"/>
    <property type="project" value="UniProtKB-UniRule"/>
</dbReference>
<dbReference type="CDD" id="cd01667">
    <property type="entry name" value="TGS_ThrRS"/>
    <property type="match status" value="1"/>
</dbReference>
<dbReference type="CDD" id="cd00860">
    <property type="entry name" value="ThrRS_anticodon"/>
    <property type="match status" value="1"/>
</dbReference>
<dbReference type="CDD" id="cd00771">
    <property type="entry name" value="ThrRS_core"/>
    <property type="match status" value="1"/>
</dbReference>
<dbReference type="FunFam" id="3.10.20.30:FF:000005">
    <property type="entry name" value="Threonine--tRNA ligase"/>
    <property type="match status" value="1"/>
</dbReference>
<dbReference type="FunFam" id="3.30.54.20:FF:000002">
    <property type="entry name" value="Threonine--tRNA ligase"/>
    <property type="match status" value="1"/>
</dbReference>
<dbReference type="FunFam" id="3.30.930.10:FF:000002">
    <property type="entry name" value="Threonine--tRNA ligase"/>
    <property type="match status" value="1"/>
</dbReference>
<dbReference type="FunFam" id="3.40.50.800:FF:000001">
    <property type="entry name" value="Threonine--tRNA ligase"/>
    <property type="match status" value="1"/>
</dbReference>
<dbReference type="FunFam" id="3.30.980.10:FF:000005">
    <property type="entry name" value="Threonyl-tRNA synthetase, mitochondrial"/>
    <property type="match status" value="1"/>
</dbReference>
<dbReference type="Gene3D" id="3.10.20.30">
    <property type="match status" value="1"/>
</dbReference>
<dbReference type="Gene3D" id="3.30.54.20">
    <property type="match status" value="1"/>
</dbReference>
<dbReference type="Gene3D" id="3.40.50.800">
    <property type="entry name" value="Anticodon-binding domain"/>
    <property type="match status" value="1"/>
</dbReference>
<dbReference type="Gene3D" id="3.30.930.10">
    <property type="entry name" value="Bira Bifunctional Protein, Domain 2"/>
    <property type="match status" value="1"/>
</dbReference>
<dbReference type="Gene3D" id="3.30.980.10">
    <property type="entry name" value="Threonyl-trna Synthetase, Chain A, domain 2"/>
    <property type="match status" value="1"/>
</dbReference>
<dbReference type="HAMAP" id="MF_00184">
    <property type="entry name" value="Thr_tRNA_synth"/>
    <property type="match status" value="1"/>
</dbReference>
<dbReference type="InterPro" id="IPR002314">
    <property type="entry name" value="aa-tRNA-synt_IIb"/>
</dbReference>
<dbReference type="InterPro" id="IPR006195">
    <property type="entry name" value="aa-tRNA-synth_II"/>
</dbReference>
<dbReference type="InterPro" id="IPR045864">
    <property type="entry name" value="aa-tRNA-synth_II/BPL/LPL"/>
</dbReference>
<dbReference type="InterPro" id="IPR004154">
    <property type="entry name" value="Anticodon-bd"/>
</dbReference>
<dbReference type="InterPro" id="IPR036621">
    <property type="entry name" value="Anticodon-bd_dom_sf"/>
</dbReference>
<dbReference type="InterPro" id="IPR012675">
    <property type="entry name" value="Beta-grasp_dom_sf"/>
</dbReference>
<dbReference type="InterPro" id="IPR004095">
    <property type="entry name" value="TGS"/>
</dbReference>
<dbReference type="InterPro" id="IPR012676">
    <property type="entry name" value="TGS-like"/>
</dbReference>
<dbReference type="InterPro" id="IPR002320">
    <property type="entry name" value="Thr-tRNA-ligase_IIa"/>
</dbReference>
<dbReference type="InterPro" id="IPR018163">
    <property type="entry name" value="Thr/Ala-tRNA-synth_IIc_edit"/>
</dbReference>
<dbReference type="InterPro" id="IPR047246">
    <property type="entry name" value="ThrRS_anticodon"/>
</dbReference>
<dbReference type="InterPro" id="IPR033728">
    <property type="entry name" value="ThrRS_core"/>
</dbReference>
<dbReference type="InterPro" id="IPR012947">
    <property type="entry name" value="tRNA_SAD"/>
</dbReference>
<dbReference type="NCBIfam" id="TIGR00418">
    <property type="entry name" value="thrS"/>
    <property type="match status" value="1"/>
</dbReference>
<dbReference type="PANTHER" id="PTHR11451:SF44">
    <property type="entry name" value="THREONINE--TRNA LIGASE, CHLOROPLASTIC_MITOCHONDRIAL 2"/>
    <property type="match status" value="1"/>
</dbReference>
<dbReference type="PANTHER" id="PTHR11451">
    <property type="entry name" value="THREONINE-TRNA LIGASE"/>
    <property type="match status" value="1"/>
</dbReference>
<dbReference type="Pfam" id="PF03129">
    <property type="entry name" value="HGTP_anticodon"/>
    <property type="match status" value="1"/>
</dbReference>
<dbReference type="Pfam" id="PF02824">
    <property type="entry name" value="TGS"/>
    <property type="match status" value="1"/>
</dbReference>
<dbReference type="Pfam" id="PF00587">
    <property type="entry name" value="tRNA-synt_2b"/>
    <property type="match status" value="1"/>
</dbReference>
<dbReference type="Pfam" id="PF07973">
    <property type="entry name" value="tRNA_SAD"/>
    <property type="match status" value="1"/>
</dbReference>
<dbReference type="PRINTS" id="PR01047">
    <property type="entry name" value="TRNASYNTHTHR"/>
</dbReference>
<dbReference type="SMART" id="SM00863">
    <property type="entry name" value="tRNA_SAD"/>
    <property type="match status" value="1"/>
</dbReference>
<dbReference type="SUPFAM" id="SSF52954">
    <property type="entry name" value="Class II aaRS ABD-related"/>
    <property type="match status" value="1"/>
</dbReference>
<dbReference type="SUPFAM" id="SSF55681">
    <property type="entry name" value="Class II aaRS and biotin synthetases"/>
    <property type="match status" value="1"/>
</dbReference>
<dbReference type="SUPFAM" id="SSF81271">
    <property type="entry name" value="TGS-like"/>
    <property type="match status" value="1"/>
</dbReference>
<dbReference type="SUPFAM" id="SSF55186">
    <property type="entry name" value="ThrRS/AlaRS common domain"/>
    <property type="match status" value="1"/>
</dbReference>
<dbReference type="PROSITE" id="PS50862">
    <property type="entry name" value="AA_TRNA_LIGASE_II"/>
    <property type="match status" value="1"/>
</dbReference>
<dbReference type="PROSITE" id="PS51880">
    <property type="entry name" value="TGS"/>
    <property type="match status" value="1"/>
</dbReference>
<keyword id="KW-0030">Aminoacyl-tRNA synthetase</keyword>
<keyword id="KW-0067">ATP-binding</keyword>
<keyword id="KW-0963">Cytoplasm</keyword>
<keyword id="KW-0436">Ligase</keyword>
<keyword id="KW-0479">Metal-binding</keyword>
<keyword id="KW-0547">Nucleotide-binding</keyword>
<keyword id="KW-0648">Protein biosynthesis</keyword>
<keyword id="KW-0694">RNA-binding</keyword>
<keyword id="KW-0820">tRNA-binding</keyword>
<keyword id="KW-0862">Zinc</keyword>
<accession>C3LUV8</accession>
<reference key="1">
    <citation type="journal article" date="2008" name="PLoS ONE">
        <title>A recalibrated molecular clock and independent origins for the cholera pandemic clones.</title>
        <authorList>
            <person name="Feng L."/>
            <person name="Reeves P.R."/>
            <person name="Lan R."/>
            <person name="Ren Y."/>
            <person name="Gao C."/>
            <person name="Zhou Z."/>
            <person name="Ren Y."/>
            <person name="Cheng J."/>
            <person name="Wang W."/>
            <person name="Wang J."/>
            <person name="Qian W."/>
            <person name="Li D."/>
            <person name="Wang L."/>
        </authorList>
    </citation>
    <scope>NUCLEOTIDE SEQUENCE [LARGE SCALE GENOMIC DNA]</scope>
    <source>
        <strain>M66-2</strain>
    </source>
</reference>
<protein>
    <recommendedName>
        <fullName evidence="1">Threonine--tRNA ligase</fullName>
        <ecNumber evidence="1">6.1.1.3</ecNumber>
    </recommendedName>
    <alternativeName>
        <fullName evidence="1">Threonyl-tRNA synthetase</fullName>
        <shortName evidence="1">ThrRS</shortName>
    </alternativeName>
</protein>
<gene>
    <name evidence="1" type="primary">thrS</name>
    <name type="ordered locus">VCM66_A0286</name>
</gene>
<proteinExistence type="inferred from homology"/>
<feature type="chain" id="PRO_1000199576" description="Threonine--tRNA ligase">
    <location>
        <begin position="1"/>
        <end position="642"/>
    </location>
</feature>
<feature type="domain" description="TGS" evidence="2">
    <location>
        <begin position="1"/>
        <end position="61"/>
    </location>
</feature>
<feature type="region of interest" description="Catalytic" evidence="1">
    <location>
        <begin position="244"/>
        <end position="535"/>
    </location>
</feature>
<feature type="binding site" evidence="1">
    <location>
        <position position="335"/>
    </location>
    <ligand>
        <name>Zn(2+)</name>
        <dbReference type="ChEBI" id="CHEBI:29105"/>
    </ligand>
</feature>
<feature type="binding site" evidence="1">
    <location>
        <position position="386"/>
    </location>
    <ligand>
        <name>Zn(2+)</name>
        <dbReference type="ChEBI" id="CHEBI:29105"/>
    </ligand>
</feature>
<feature type="binding site" evidence="1">
    <location>
        <position position="512"/>
    </location>
    <ligand>
        <name>Zn(2+)</name>
        <dbReference type="ChEBI" id="CHEBI:29105"/>
    </ligand>
</feature>
<name>SYT_VIBCM</name>